<protein>
    <recommendedName>
        <fullName evidence="4">Ectoine dioxygenase</fullName>
        <ecNumber evidence="3">1.14.11.55</ecNumber>
    </recommendedName>
    <alternativeName>
        <fullName evidence="4">Ectoine hydroxylase</fullName>
    </alternativeName>
</protein>
<name>ECTD_STUS1</name>
<sequence length="302" mass="34184">MQADLYPSRQEDQPSWQERLDPVVYRSDLENAPIAAELVERFERDGYLVIPNLFSADEVALFRAELERMRQDPAVAGSGKTIKEPDSGAIRSVFAIHKDNELFARVAADERTAGIARFILGGDLYVHQSRMNFKPGFTGKEFYWHSDFETWHIEDGMPRMRCLSCSILLTDNEPHNGPLMLMPGSHKHYVRCVGATPENHYEKSLRKQEIGIPDQNSLSELASRFGIDCATGPAGSVVFFDCNTMHGSNGNITPSARSNLFYVYNHVDNAVQAPFCEQKPRPAFVAERENFKPLDIRPQQYL</sequence>
<organism>
    <name type="scientific">Stutzerimonas stutzeri (strain A1501)</name>
    <name type="common">Pseudomonas stutzeri</name>
    <dbReference type="NCBI Taxonomy" id="379731"/>
    <lineage>
        <taxon>Bacteria</taxon>
        <taxon>Pseudomonadati</taxon>
        <taxon>Pseudomonadota</taxon>
        <taxon>Gammaproteobacteria</taxon>
        <taxon>Pseudomonadales</taxon>
        <taxon>Pseudomonadaceae</taxon>
        <taxon>Stutzerimonas</taxon>
    </lineage>
</organism>
<keyword id="KW-0223">Dioxygenase</keyword>
<keyword id="KW-0408">Iron</keyword>
<keyword id="KW-0479">Metal-binding</keyword>
<keyword id="KW-0560">Oxidoreductase</keyword>
<keyword id="KW-1185">Reference proteome</keyword>
<dbReference type="EC" id="1.14.11.55" evidence="3"/>
<dbReference type="EMBL" id="CP000304">
    <property type="protein sequence ID" value="ABP77885.1"/>
    <property type="molecule type" value="Genomic_DNA"/>
</dbReference>
<dbReference type="SMR" id="A4VFY4"/>
<dbReference type="KEGG" id="psa:PST_0178"/>
<dbReference type="eggNOG" id="COG5285">
    <property type="taxonomic scope" value="Bacteria"/>
</dbReference>
<dbReference type="HOGENOM" id="CLU_048953_5_0_6"/>
<dbReference type="Proteomes" id="UP000000233">
    <property type="component" value="Chromosome"/>
</dbReference>
<dbReference type="GO" id="GO:0016706">
    <property type="term" value="F:2-oxoglutarate-dependent dioxygenase activity"/>
    <property type="evidence" value="ECO:0000314"/>
    <property type="project" value="UniProtKB"/>
</dbReference>
<dbReference type="GO" id="GO:0005506">
    <property type="term" value="F:iron ion binding"/>
    <property type="evidence" value="ECO:0000314"/>
    <property type="project" value="UniProtKB"/>
</dbReference>
<dbReference type="FunFam" id="2.60.120.620:FF:000016">
    <property type="entry name" value="Ectoine hydroxylase"/>
    <property type="match status" value="1"/>
</dbReference>
<dbReference type="Gene3D" id="2.60.120.620">
    <property type="entry name" value="q2cbj1_9rhob like domain"/>
    <property type="match status" value="1"/>
</dbReference>
<dbReference type="InterPro" id="IPR012774">
    <property type="entry name" value="EctD"/>
</dbReference>
<dbReference type="InterPro" id="IPR008775">
    <property type="entry name" value="Phytyl_CoA_dOase-like"/>
</dbReference>
<dbReference type="NCBIfam" id="TIGR02408">
    <property type="entry name" value="ectoine_ThpD"/>
    <property type="match status" value="1"/>
</dbReference>
<dbReference type="PANTHER" id="PTHR20883:SF48">
    <property type="entry name" value="ECTOINE DIOXYGENASE"/>
    <property type="match status" value="1"/>
</dbReference>
<dbReference type="PANTHER" id="PTHR20883">
    <property type="entry name" value="PHYTANOYL-COA DIOXYGENASE DOMAIN CONTAINING 1"/>
    <property type="match status" value="1"/>
</dbReference>
<dbReference type="Pfam" id="PF05721">
    <property type="entry name" value="PhyH"/>
    <property type="match status" value="1"/>
</dbReference>
<dbReference type="SUPFAM" id="SSF51197">
    <property type="entry name" value="Clavaminate synthase-like"/>
    <property type="match status" value="1"/>
</dbReference>
<accession>A4VFY4</accession>
<comment type="function">
    <text evidence="3">Involved in the biosynthesis of 5-hydroxyectoine, called compatible solute, which helps organisms to survive extreme osmotic stress by acting as a highly soluble organic osmolyte. Catalyzes the 2-oxoglutarate-dependent selective hydroxylation of L-ectoine to yield (4S,5S)-5-hydroxyectoine.</text>
</comment>
<comment type="catalytic activity">
    <reaction evidence="3">
        <text>L-ectoine + 2-oxoglutarate + O2 = 5-hydroxyectoine + succinate + CO2</text>
        <dbReference type="Rhea" id="RHEA:45740"/>
        <dbReference type="ChEBI" id="CHEBI:15379"/>
        <dbReference type="ChEBI" id="CHEBI:16526"/>
        <dbReference type="ChEBI" id="CHEBI:16810"/>
        <dbReference type="ChEBI" id="CHEBI:30031"/>
        <dbReference type="ChEBI" id="CHEBI:58515"/>
        <dbReference type="ChEBI" id="CHEBI:85413"/>
        <dbReference type="EC" id="1.14.11.55"/>
    </reaction>
</comment>
<comment type="cofactor">
    <cofactor evidence="3">
        <name>Fe(2+)</name>
        <dbReference type="ChEBI" id="CHEBI:29033"/>
    </cofactor>
    <text evidence="3">Binds 1 Fe(2+) ion.</text>
</comment>
<comment type="biophysicochemical properties">
    <kinetics>
        <KM evidence="3">4.6 mM for 2-oxoglutarate (at pH 7.5 and 35 degrees Celsius)</KM>
        <KM evidence="3">6.2 mM for ectoine (at pH 7.5 and 35 degrees Celsius)</KM>
        <Vmax evidence="3">6.7 umol/min/mg enzyme (at pH 7.5 and 35 degrees Celsius)</Vmax>
        <text evidence="3">kcat is 8.9 sec(-1) for ectoin as substrate (at pH 7.5 and 35 degrees Celsius).</text>
    </kinetics>
    <phDependence>
        <text evidence="3">Optimum pH is 7.5.</text>
    </phDependence>
    <temperatureDependence>
        <text evidence="3">Optimum temperature is 35 degrees Celsius (PubMed:24714029). Active from 10 to 50 degrees Celsius (PubMed:24714029).</text>
    </temperatureDependence>
</comment>
<comment type="subunit">
    <text evidence="3">Homodimer.</text>
</comment>
<comment type="similarity">
    <text evidence="5">Belongs to the PhyH family. EctD subfamily.</text>
</comment>
<feature type="chain" id="PRO_0000445003" description="Ectoine dioxygenase">
    <location>
        <begin position="1"/>
        <end position="302"/>
    </location>
</feature>
<feature type="binding site" evidence="1">
    <location>
        <position position="128"/>
    </location>
    <ligand>
        <name>L-ectoine</name>
        <dbReference type="ChEBI" id="CHEBI:58515"/>
    </ligand>
</feature>
<feature type="binding site" evidence="1">
    <location>
        <position position="134"/>
    </location>
    <ligand>
        <name>2-oxoglutarate</name>
        <dbReference type="ChEBI" id="CHEBI:16810"/>
    </ligand>
</feature>
<feature type="binding site" evidence="2">
    <location>
        <position position="145"/>
    </location>
    <ligand>
        <name>Fe cation</name>
        <dbReference type="ChEBI" id="CHEBI:24875"/>
    </ligand>
</feature>
<feature type="binding site" evidence="2">
    <location>
        <position position="147"/>
    </location>
    <ligand>
        <name>Fe cation</name>
        <dbReference type="ChEBI" id="CHEBI:24875"/>
    </ligand>
</feature>
<feature type="binding site" evidence="2">
    <location>
        <position position="246"/>
    </location>
    <ligand>
        <name>Fe cation</name>
        <dbReference type="ChEBI" id="CHEBI:24875"/>
    </ligand>
</feature>
<feature type="site" description="Important for ectoine stabilization" evidence="1">
    <location>
        <position position="151"/>
    </location>
</feature>
<proteinExistence type="evidence at protein level"/>
<evidence type="ECO:0000250" key="1">
    <source>
        <dbReference type="UniProtKB" id="Q1GNW5"/>
    </source>
</evidence>
<evidence type="ECO:0000250" key="2">
    <source>
        <dbReference type="UniProtKB" id="Q2TDY4"/>
    </source>
</evidence>
<evidence type="ECO:0000269" key="3">
    <source>
    </source>
</evidence>
<evidence type="ECO:0000303" key="4">
    <source>
    </source>
</evidence>
<evidence type="ECO:0000305" key="5"/>
<evidence type="ECO:0000312" key="6">
    <source>
        <dbReference type="EMBL" id="ABP77885.1"/>
    </source>
</evidence>
<evidence type="ECO:0000312" key="7">
    <source>
        <dbReference type="Proteomes" id="UP000000233"/>
    </source>
</evidence>
<reference key="1">
    <citation type="journal article" date="2008" name="Proc. Natl. Acad. Sci. U.S.A.">
        <title>Nitrogen fixation island and rhizosphere competence traits in the genome of root-associated Pseudomonas stutzeri A1501.</title>
        <authorList>
            <person name="Yan Y."/>
            <person name="Yang J."/>
            <person name="Dou Y."/>
            <person name="Chen M."/>
            <person name="Ping S."/>
            <person name="Peng J."/>
            <person name="Lu W."/>
            <person name="Zhang W."/>
            <person name="Yao Z."/>
            <person name="Li H."/>
            <person name="Liu W."/>
            <person name="He S."/>
            <person name="Geng L."/>
            <person name="Zhang X."/>
            <person name="Yang F."/>
            <person name="Yu H."/>
            <person name="Zhan Y."/>
            <person name="Li D."/>
            <person name="Lin Z."/>
            <person name="Wang Y."/>
            <person name="Elmerich C."/>
            <person name="Lin M."/>
            <person name="Jin Q."/>
        </authorList>
    </citation>
    <scope>NUCLEOTIDE SEQUENCE [LARGE SCALE GENOMIC DNA]</scope>
    <source>
        <strain evidence="6 7">A1501</strain>
    </source>
</reference>
<reference key="2">
    <citation type="journal article" date="2014" name="PLoS ONE">
        <title>Biochemical properties of ectoine hydroxylases from extremophiles and their wider taxonomic distribution among microorganisms.</title>
        <authorList>
            <person name="Widderich N."/>
            <person name="Hoppner A."/>
            <person name="Pittelkow M."/>
            <person name="Heider J."/>
            <person name="Smits S.H."/>
            <person name="Bremer E."/>
        </authorList>
    </citation>
    <scope>FUNCTION</scope>
    <scope>CATALYTIC ACTIVITY</scope>
    <scope>BIOPHYSICOCHEMICAL PROPERTIES</scope>
    <scope>COFACTOR</scope>
    <scope>SUBUNIT</scope>
    <source>
        <strain>A1501</strain>
    </source>
</reference>
<gene>
    <name evidence="4" type="primary">ectD</name>
    <name evidence="6" type="ordered locus">PST_0178</name>
</gene>